<proteinExistence type="inferred from homology"/>
<dbReference type="EMBL" id="AF177883">
    <property type="protein sequence ID" value="AAK43366.1"/>
    <property type="molecule type" value="Genomic_DNA"/>
</dbReference>
<dbReference type="SMR" id="Q95NC6"/>
<dbReference type="GlyCosmos" id="Q95NC6">
    <property type="glycosylation" value="2 sites, No reported glycans"/>
</dbReference>
<dbReference type="GO" id="GO:0005737">
    <property type="term" value="C:cytoplasm"/>
    <property type="evidence" value="ECO:0007669"/>
    <property type="project" value="TreeGrafter"/>
</dbReference>
<dbReference type="GO" id="GO:0009897">
    <property type="term" value="C:external side of plasma membrane"/>
    <property type="evidence" value="ECO:0000250"/>
    <property type="project" value="UniProtKB"/>
</dbReference>
<dbReference type="GO" id="GO:0016493">
    <property type="term" value="F:C-C chemokine receptor activity"/>
    <property type="evidence" value="ECO:0000250"/>
    <property type="project" value="UniProtKB"/>
</dbReference>
<dbReference type="GO" id="GO:0071791">
    <property type="term" value="F:chemokine (C-C motif) ligand 5 binding"/>
    <property type="evidence" value="ECO:0007669"/>
    <property type="project" value="TreeGrafter"/>
</dbReference>
<dbReference type="GO" id="GO:0019722">
    <property type="term" value="P:calcium-mediated signaling"/>
    <property type="evidence" value="ECO:0007669"/>
    <property type="project" value="TreeGrafter"/>
</dbReference>
<dbReference type="GO" id="GO:0060326">
    <property type="term" value="P:cell chemotaxis"/>
    <property type="evidence" value="ECO:0007669"/>
    <property type="project" value="TreeGrafter"/>
</dbReference>
<dbReference type="GO" id="GO:0006955">
    <property type="term" value="P:immune response"/>
    <property type="evidence" value="ECO:0007669"/>
    <property type="project" value="InterPro"/>
</dbReference>
<dbReference type="GO" id="GO:0006954">
    <property type="term" value="P:inflammatory response"/>
    <property type="evidence" value="ECO:0007669"/>
    <property type="project" value="InterPro"/>
</dbReference>
<dbReference type="GO" id="GO:0007204">
    <property type="term" value="P:positive regulation of cytosolic calcium ion concentration"/>
    <property type="evidence" value="ECO:0007669"/>
    <property type="project" value="TreeGrafter"/>
</dbReference>
<dbReference type="CDD" id="cd15184">
    <property type="entry name" value="7tmA_CCR5_CCR2"/>
    <property type="match status" value="1"/>
</dbReference>
<dbReference type="FunFam" id="1.20.1070.10:FF:000026">
    <property type="entry name" value="C-C chemokine receptor type 5"/>
    <property type="match status" value="1"/>
</dbReference>
<dbReference type="Gene3D" id="1.20.1070.10">
    <property type="entry name" value="Rhodopsin 7-helix transmembrane proteins"/>
    <property type="match status" value="1"/>
</dbReference>
<dbReference type="InterPro" id="IPR050119">
    <property type="entry name" value="CCR1-9-like"/>
</dbReference>
<dbReference type="InterPro" id="IPR002240">
    <property type="entry name" value="Chemokine_CCR5"/>
</dbReference>
<dbReference type="InterPro" id="IPR000355">
    <property type="entry name" value="Chemokine_rcpt"/>
</dbReference>
<dbReference type="InterPro" id="IPR000276">
    <property type="entry name" value="GPCR_Rhodpsn"/>
</dbReference>
<dbReference type="InterPro" id="IPR017452">
    <property type="entry name" value="GPCR_Rhodpsn_7TM"/>
</dbReference>
<dbReference type="PANTHER" id="PTHR10489:SF686">
    <property type="entry name" value="C-C CHEMOKINE RECEPTOR TYPE 5"/>
    <property type="match status" value="1"/>
</dbReference>
<dbReference type="PANTHER" id="PTHR10489">
    <property type="entry name" value="CELL ADHESION MOLECULE"/>
    <property type="match status" value="1"/>
</dbReference>
<dbReference type="Pfam" id="PF00001">
    <property type="entry name" value="7tm_1"/>
    <property type="match status" value="1"/>
</dbReference>
<dbReference type="PRINTS" id="PR00657">
    <property type="entry name" value="CCCHEMOKINER"/>
</dbReference>
<dbReference type="PRINTS" id="PR01110">
    <property type="entry name" value="CHEMOKINER5"/>
</dbReference>
<dbReference type="PRINTS" id="PR00237">
    <property type="entry name" value="GPCRRHODOPSN"/>
</dbReference>
<dbReference type="SUPFAM" id="SSF81321">
    <property type="entry name" value="Family A G protein-coupled receptor-like"/>
    <property type="match status" value="1"/>
</dbReference>
<dbReference type="PROSITE" id="PS00237">
    <property type="entry name" value="G_PROTEIN_RECEP_F1_1"/>
    <property type="match status" value="1"/>
</dbReference>
<dbReference type="PROSITE" id="PS50262">
    <property type="entry name" value="G_PROTEIN_RECEP_F1_2"/>
    <property type="match status" value="1"/>
</dbReference>
<organism>
    <name type="scientific">Trachypithecus johnii</name>
    <name type="common">Nilgiri langur</name>
    <name type="synonym">Semnopithecus johnii</name>
    <dbReference type="NCBI Taxonomy" id="66063"/>
    <lineage>
        <taxon>Eukaryota</taxon>
        <taxon>Metazoa</taxon>
        <taxon>Chordata</taxon>
        <taxon>Craniata</taxon>
        <taxon>Vertebrata</taxon>
        <taxon>Euteleostomi</taxon>
        <taxon>Mammalia</taxon>
        <taxon>Eutheria</taxon>
        <taxon>Euarchontoglires</taxon>
        <taxon>Primates</taxon>
        <taxon>Haplorrhini</taxon>
        <taxon>Catarrhini</taxon>
        <taxon>Cercopithecidae</taxon>
        <taxon>Colobinae</taxon>
        <taxon>Trachypithecus</taxon>
    </lineage>
</organism>
<protein>
    <recommendedName>
        <fullName>C-C chemokine receptor type 5</fullName>
        <shortName>C-C CKR-5</shortName>
        <shortName>CC-CKR-5</shortName>
        <shortName>CCR-5</shortName>
        <shortName>CCR5</shortName>
    </recommendedName>
    <cdAntigenName>CD195</cdAntigenName>
</protein>
<feature type="chain" id="PRO_0000069284" description="C-C chemokine receptor type 5">
    <location>
        <begin position="1"/>
        <end position="352"/>
    </location>
</feature>
<feature type="topological domain" description="Extracellular" evidence="3">
    <location>
        <begin position="1"/>
        <end position="30"/>
    </location>
</feature>
<feature type="transmembrane region" description="Helical; Name=1" evidence="3">
    <location>
        <begin position="31"/>
        <end position="58"/>
    </location>
</feature>
<feature type="topological domain" description="Cytoplasmic" evidence="3">
    <location>
        <begin position="59"/>
        <end position="68"/>
    </location>
</feature>
<feature type="transmembrane region" description="Helical; Name=2" evidence="3">
    <location>
        <begin position="69"/>
        <end position="89"/>
    </location>
</feature>
<feature type="topological domain" description="Extracellular" evidence="3">
    <location>
        <begin position="90"/>
        <end position="102"/>
    </location>
</feature>
<feature type="transmembrane region" description="Helical; Name=3" evidence="3">
    <location>
        <begin position="103"/>
        <end position="124"/>
    </location>
</feature>
<feature type="topological domain" description="Cytoplasmic" evidence="3">
    <location>
        <begin position="125"/>
        <end position="141"/>
    </location>
</feature>
<feature type="transmembrane region" description="Helical; Name=4" evidence="3">
    <location>
        <begin position="142"/>
        <end position="166"/>
    </location>
</feature>
<feature type="topological domain" description="Extracellular" evidence="3">
    <location>
        <begin position="167"/>
        <end position="198"/>
    </location>
</feature>
<feature type="transmembrane region" description="Helical; Name=5" evidence="3">
    <location>
        <begin position="199"/>
        <end position="218"/>
    </location>
</feature>
<feature type="topological domain" description="Cytoplasmic" evidence="3">
    <location>
        <begin position="219"/>
        <end position="235"/>
    </location>
</feature>
<feature type="transmembrane region" description="Helical; Name=6" evidence="3">
    <location>
        <begin position="236"/>
        <end position="260"/>
    </location>
</feature>
<feature type="topological domain" description="Extracellular" evidence="3">
    <location>
        <begin position="261"/>
        <end position="277"/>
    </location>
</feature>
<feature type="transmembrane region" description="Helical; Name=7" evidence="3">
    <location>
        <begin position="278"/>
        <end position="301"/>
    </location>
</feature>
<feature type="topological domain" description="Cytoplasmic" evidence="3">
    <location>
        <begin position="302"/>
        <end position="352"/>
    </location>
</feature>
<feature type="modified residue" description="Sulfotyrosine" evidence="1">
    <location>
        <position position="3"/>
    </location>
</feature>
<feature type="modified residue" description="Sulfotyrosine" evidence="3">
    <location>
        <position position="10"/>
    </location>
</feature>
<feature type="modified residue" description="Sulfotyrosine" evidence="3">
    <location>
        <position position="14"/>
    </location>
</feature>
<feature type="modified residue" description="Sulfotyrosine" evidence="3">
    <location>
        <position position="15"/>
    </location>
</feature>
<feature type="modified residue" description="Phosphoserine; by BARK1" evidence="1">
    <location>
        <position position="336"/>
    </location>
</feature>
<feature type="modified residue" description="Phosphoserine; by BARK1" evidence="1">
    <location>
        <position position="337"/>
    </location>
</feature>
<feature type="modified residue" description="Phosphoserine; by BARK1" evidence="1">
    <location>
        <position position="342"/>
    </location>
</feature>
<feature type="modified residue" description="Phosphoserine; by BARK1" evidence="1">
    <location>
        <position position="349"/>
    </location>
</feature>
<feature type="lipid moiety-binding region" description="S-palmitoyl cysteine" evidence="1">
    <location>
        <position position="321"/>
    </location>
</feature>
<feature type="lipid moiety-binding region" description="S-palmitoyl cysteine" evidence="1">
    <location>
        <position position="323"/>
    </location>
</feature>
<feature type="lipid moiety-binding region" description="S-palmitoyl cysteine" evidence="1">
    <location>
        <position position="324"/>
    </location>
</feature>
<feature type="glycosylation site" description="O-linked (GalNAc...) serine" evidence="1">
    <location>
        <position position="6"/>
    </location>
</feature>
<feature type="glycosylation site" description="O-linked (GalNAc...) serine" evidence="1">
    <location>
        <position position="7"/>
    </location>
</feature>
<feature type="disulfide bond" evidence="1">
    <location>
        <begin position="20"/>
        <end position="269"/>
    </location>
</feature>
<feature type="disulfide bond" evidence="4">
    <location>
        <begin position="101"/>
        <end position="178"/>
    </location>
</feature>
<reference key="1">
    <citation type="journal article" date="1999" name="Mol. Biol. Evol.">
        <title>Sequence evolution of the CCR5 chemokine receptor gene in primates.</title>
        <authorList>
            <person name="Zhang Y.-W."/>
            <person name="Ryder O.A."/>
            <person name="Zhang Y.-P."/>
        </authorList>
    </citation>
    <scope>NUCLEOTIDE SEQUENCE [GENOMIC DNA]</scope>
</reference>
<evidence type="ECO:0000250" key="1">
    <source>
        <dbReference type="UniProtKB" id="P51681"/>
    </source>
</evidence>
<evidence type="ECO:0000250" key="2">
    <source>
        <dbReference type="UniProtKB" id="Q9XT76"/>
    </source>
</evidence>
<evidence type="ECO:0000255" key="3"/>
<evidence type="ECO:0000255" key="4">
    <source>
        <dbReference type="PROSITE-ProRule" id="PRU00521"/>
    </source>
</evidence>
<keyword id="KW-1003">Cell membrane</keyword>
<keyword id="KW-1015">Disulfide bond</keyword>
<keyword id="KW-0297">G-protein coupled receptor</keyword>
<keyword id="KW-0325">Glycoprotein</keyword>
<keyword id="KW-0449">Lipoprotein</keyword>
<keyword id="KW-0472">Membrane</keyword>
<keyword id="KW-0564">Palmitate</keyword>
<keyword id="KW-0597">Phosphoprotein</keyword>
<keyword id="KW-0675">Receptor</keyword>
<keyword id="KW-0765">Sulfation</keyword>
<keyword id="KW-0807">Transducer</keyword>
<keyword id="KW-0812">Transmembrane</keyword>
<keyword id="KW-1133">Transmembrane helix</keyword>
<sequence>MDYQVSSPTYDIDYYTSEPCQKVNVKQIAARLLPPLYSLVFIFGFVGNILVVLILINCKRLKSMTDIYLLNLAISDLFFLLTVPFWAHYAAAQWDFGNTMCQLLTGLYFIGFFSGIFFIILLTIDRYLAIVHAVFALKARTVTFGVVTSVITWVVAVFASLPGIIFTRSQREGLHYTCSSHFPYSQYQFWKNFQTLKIVILGLVLPLLVMVICYSGILKTLLRCRSEKKRHRAVRLIFTIMIVYFLFWAPYNIVLLLNTFQEFFGLNNCSSSNRLDQAMQVTETLGMTHCCINPIIYAFVGEKFRNYLLVFFQKHIAKHFCKCCSIFQQEAPERASSVYTRSTGEQEISVGL</sequence>
<gene>
    <name type="primary">CCR5</name>
    <name type="synonym">CMKBR5</name>
</gene>
<name>CCR5_TRAJO</name>
<accession>Q95NC6</accession>
<comment type="function">
    <text evidence="1">Receptor for a number of inflammatory CC-chemokines including CCL3/MIP-1-alpha, CCL4/MIP-1-beta and RANTES and subsequently transduces a signal by increasing the intracellular calcium ion level. May play a role in the control of granulocytic lineage proliferation or differentiation. Participates in T-lymphocyte migration to the infection site by acting as a chemotactic receptor.</text>
</comment>
<comment type="subunit">
    <text evidence="1">Interacts with PRAF2. Efficient ligand binding to CCL3/MIP-1alpha and CCL4/MIP-1beta requires sulfation, O-glycosylation and sialic acid modifications. Glycosylation on Ser-6 is required for efficient binding of CCL4. Interacts with GRK2. Interacts with ARRB1 and ARRB2. Interacts with CNIH4. Interacts with S100A4; this interaction stimulates T-lymphocyte chemotaxis.</text>
</comment>
<comment type="subcellular location">
    <subcellularLocation>
        <location evidence="2">Cell membrane</location>
        <topology evidence="2">Multi-pass membrane protein</topology>
    </subcellularLocation>
</comment>
<comment type="PTM">
    <text evidence="1">Sulfated on at least 2 of the N-terminal tyrosines. Sulfation is required for efficient binding of the chemokines, CCL3 and CCL4 (By similarity).</text>
</comment>
<comment type="PTM">
    <text evidence="1">Palmitoylation in the C-terminal is important for cell surface expression.</text>
</comment>
<comment type="PTM">
    <text evidence="1">Phosphorylation on serine residues in the C-terminal is stimulated by binding CC chemokines especially by APO-RANTES.</text>
</comment>
<comment type="PTM">
    <text evidence="1">O-glycosylated, but not N-glycosylated. Ser-6 appears to be the major site even if Ser-7 may be also O-glycosylated. Also sialylated glycans present which contribute to chemokine binding. Thr-16 and Ser-17 may also be glycosylated and, if so, with small moieties such as a T-antigen.</text>
</comment>
<comment type="similarity">
    <text evidence="4">Belongs to the G-protein coupled receptor 1 family.</text>
</comment>